<evidence type="ECO:0000255" key="1">
    <source>
        <dbReference type="HAMAP-Rule" id="MF_01652"/>
    </source>
</evidence>
<gene>
    <name evidence="1" type="primary">mhpA</name>
</gene>
<comment type="function">
    <text evidence="1">Catalyzes the insertion of one atom of molecular oxygen into position 2 of the phenyl ring of 3-(3-hydroxyphenyl)propionate (3-HPP) and hydroxycinnamic acid (3HCI).</text>
</comment>
<comment type="catalytic activity">
    <reaction evidence="1">
        <text>3-(3-hydroxyphenyl)propanoate + NADH + O2 + H(+) = 3-(2,3-dihydroxyphenyl)propanoate + NAD(+) + H2O</text>
        <dbReference type="Rhea" id="RHEA:24785"/>
        <dbReference type="ChEBI" id="CHEBI:15377"/>
        <dbReference type="ChEBI" id="CHEBI:15378"/>
        <dbReference type="ChEBI" id="CHEBI:15379"/>
        <dbReference type="ChEBI" id="CHEBI:46951"/>
        <dbReference type="ChEBI" id="CHEBI:57277"/>
        <dbReference type="ChEBI" id="CHEBI:57540"/>
        <dbReference type="ChEBI" id="CHEBI:57945"/>
        <dbReference type="EC" id="1.14.13.127"/>
    </reaction>
</comment>
<comment type="catalytic activity">
    <reaction evidence="1">
        <text>(2E)-3-(3-hydroxyphenyl)prop-2-enoate + NADH + O2 + H(+) = (2E)-3-(2,3-dihydroxyphenyl)prop-2-enoate + NAD(+) + H2O</text>
        <dbReference type="Rhea" id="RHEA:27846"/>
        <dbReference type="ChEBI" id="CHEBI:15377"/>
        <dbReference type="ChEBI" id="CHEBI:15378"/>
        <dbReference type="ChEBI" id="CHEBI:15379"/>
        <dbReference type="ChEBI" id="CHEBI:47928"/>
        <dbReference type="ChEBI" id="CHEBI:57540"/>
        <dbReference type="ChEBI" id="CHEBI:57945"/>
        <dbReference type="ChEBI" id="CHEBI:58642"/>
        <dbReference type="EC" id="1.14.13.127"/>
    </reaction>
</comment>
<comment type="cofactor">
    <cofactor evidence="1">
        <name>FAD</name>
        <dbReference type="ChEBI" id="CHEBI:57692"/>
    </cofactor>
</comment>
<comment type="pathway">
    <text evidence="1">Aromatic compound metabolism; 3-phenylpropanoate degradation.</text>
</comment>
<comment type="similarity">
    <text evidence="1">Belongs to the PheA/TfdB FAD monooxygenase family.</text>
</comment>
<reference key="1">
    <citation type="journal article" date="1999" name="Microbiology">
        <title>Genetic organization and characteristics of the 3-(3-hydroxyphenyl)propionic acid degradation pathway of Comamonas testosteroni TA441.</title>
        <authorList>
            <person name="Arai H."/>
            <person name="Yamamoto T."/>
            <person name="Ohishi T."/>
            <person name="Shimizu T."/>
            <person name="Nakata T."/>
            <person name="Kudo T."/>
        </authorList>
    </citation>
    <scope>NUCLEOTIDE SEQUENCE [GENOMIC DNA]</scope>
    <source>
        <strain>TA441</strain>
    </source>
</reference>
<accession>Q9S158</accession>
<feature type="chain" id="PRO_0000337629" description="3-(3-hydroxy-phenyl)propionate/3-hydroxycinnamic acid hydroxylase">
    <location>
        <begin position="1"/>
        <end position="589"/>
    </location>
</feature>
<feature type="binding site" evidence="1">
    <location>
        <begin position="15"/>
        <end position="44"/>
    </location>
    <ligand>
        <name>FAD</name>
        <dbReference type="ChEBI" id="CHEBI:57692"/>
    </ligand>
</feature>
<feature type="binding site" evidence="1">
    <location>
        <begin position="283"/>
        <end position="293"/>
    </location>
    <ligand>
        <name>FAD</name>
        <dbReference type="ChEBI" id="CHEBI:57692"/>
    </ligand>
</feature>
<sequence length="589" mass="65297">MNAPQENQASQDDADVLIIGAGPVGLTLANTLGMAGVRVIVAEKLPRIIDYPRAIGIDDESLRTLQAAGLSDQVQAHITPHHWMRFYTASGQCFASIEPRTDEYGWSRRNAFIQPQVDDILYRGLQRFDQVQVLLGHELHSFSQDDAGITATLKDADGVERTLRAKYLVASDGGNSLVRRMLNVAFEGRTKPNQWIVVDVRNDPLGTPHIDMHCDPQRPYVSAALPHGIRRFEFMVMPGETEEQLSRPENLAQLMRKVVADPDKVDYIRKRVYTHNARLAAQFRVDRILLAGDAAHIMPVWQGQGYNSGMRDASNLAWKLAMVVKGEARSDLLDSYEQERRDHARSMIHLSEVAGDIFAPESHTAAKVRDTVMLALNAVPPVKQYFAEMRFKPMPRYEQGVVLHHTGTGNQGVRTPFAGLLDRSGNTPLGRLLGLMAEKKESLVGRLVHGLETAASSPVGRMFIQPRVATANGHSGLLDDFVGLNFCILAWGTDPSYGMDEEALNFWQRLGARFIRAMPAGQLLHPTPTRDGVLTVGDEQGRLKDWFSAQGKSVVFVRPDRFVAALASPQEVSAVTRQMARVLHSPLEA</sequence>
<protein>
    <recommendedName>
        <fullName evidence="1">3-(3-hydroxy-phenyl)propionate/3-hydroxycinnamic acid hydroxylase</fullName>
        <shortName evidence="1">3-HCI hydroxylase</shortName>
        <shortName evidence="1">3-HPP hydroxylase</shortName>
        <ecNumber evidence="1">1.14.13.127</ecNumber>
    </recommendedName>
</protein>
<dbReference type="EC" id="1.14.13.127" evidence="1"/>
<dbReference type="EMBL" id="AB024335">
    <property type="protein sequence ID" value="BAA82878.1"/>
    <property type="molecule type" value="Genomic_DNA"/>
</dbReference>
<dbReference type="RefSeq" id="WP_149354309.1">
    <property type="nucleotide sequence ID" value="NZ_BKBW01000001.1"/>
</dbReference>
<dbReference type="SMR" id="Q9S158"/>
<dbReference type="UniPathway" id="UPA00714"/>
<dbReference type="GO" id="GO:0008688">
    <property type="term" value="F:3-(3-hydroxyphenyl)propionate hydroxylase activity"/>
    <property type="evidence" value="ECO:0007669"/>
    <property type="project" value="UniProtKB-UniRule"/>
</dbReference>
<dbReference type="GO" id="GO:0071949">
    <property type="term" value="F:FAD binding"/>
    <property type="evidence" value="ECO:0007669"/>
    <property type="project" value="InterPro"/>
</dbReference>
<dbReference type="GO" id="GO:0019622">
    <property type="term" value="P:3-(3-hydroxy)phenylpropionate catabolic process"/>
    <property type="evidence" value="ECO:0007669"/>
    <property type="project" value="UniProtKB-UniRule"/>
</dbReference>
<dbReference type="GO" id="GO:0019380">
    <property type="term" value="P:3-phenylpropionate catabolic process"/>
    <property type="evidence" value="ECO:0007669"/>
    <property type="project" value="UniProtKB-UniPathway"/>
</dbReference>
<dbReference type="Gene3D" id="3.30.70.2450">
    <property type="match status" value="1"/>
</dbReference>
<dbReference type="Gene3D" id="3.50.50.60">
    <property type="entry name" value="FAD/NAD(P)-binding domain"/>
    <property type="match status" value="1"/>
</dbReference>
<dbReference type="HAMAP" id="MF_01652">
    <property type="entry name" value="MhpA"/>
    <property type="match status" value="1"/>
</dbReference>
<dbReference type="InterPro" id="IPR023786">
    <property type="entry name" value="3-HPP/3HCI_hydroxylase"/>
</dbReference>
<dbReference type="InterPro" id="IPR002938">
    <property type="entry name" value="FAD-bd"/>
</dbReference>
<dbReference type="InterPro" id="IPR036188">
    <property type="entry name" value="FAD/NAD-bd_sf"/>
</dbReference>
<dbReference type="InterPro" id="IPR050631">
    <property type="entry name" value="PheA/TfdB_FAD_monoxygenase"/>
</dbReference>
<dbReference type="NCBIfam" id="NF004829">
    <property type="entry name" value="PRK06183.1-3"/>
    <property type="match status" value="1"/>
</dbReference>
<dbReference type="PANTHER" id="PTHR43476">
    <property type="entry name" value="3-(3-HYDROXY-PHENYL)PROPIONATE/3-HYDROXYCINNAMIC ACID HYDROXYLASE"/>
    <property type="match status" value="1"/>
</dbReference>
<dbReference type="PANTHER" id="PTHR43476:SF3">
    <property type="entry name" value="FAD-BINDING MONOOXYGENASE"/>
    <property type="match status" value="1"/>
</dbReference>
<dbReference type="Pfam" id="PF01494">
    <property type="entry name" value="FAD_binding_3"/>
    <property type="match status" value="1"/>
</dbReference>
<dbReference type="PRINTS" id="PR00420">
    <property type="entry name" value="RNGMNOXGNASE"/>
</dbReference>
<dbReference type="SUPFAM" id="SSF51905">
    <property type="entry name" value="FAD/NAD(P)-binding domain"/>
    <property type="match status" value="1"/>
</dbReference>
<keyword id="KW-0058">Aromatic hydrocarbons catabolism</keyword>
<keyword id="KW-0274">FAD</keyword>
<keyword id="KW-0285">Flavoprotein</keyword>
<keyword id="KW-0520">NAD</keyword>
<keyword id="KW-0560">Oxidoreductase</keyword>
<proteinExistence type="inferred from homology"/>
<organism>
    <name type="scientific">Comamonas testosteroni</name>
    <name type="common">Pseudomonas testosteroni</name>
    <dbReference type="NCBI Taxonomy" id="285"/>
    <lineage>
        <taxon>Bacteria</taxon>
        <taxon>Pseudomonadati</taxon>
        <taxon>Pseudomonadota</taxon>
        <taxon>Betaproteobacteria</taxon>
        <taxon>Burkholderiales</taxon>
        <taxon>Comamonadaceae</taxon>
        <taxon>Comamonas</taxon>
    </lineage>
</organism>
<name>MHPA_COMTE</name>